<evidence type="ECO:0000255" key="1">
    <source>
        <dbReference type="HAMAP-Rule" id="MF_00912"/>
    </source>
</evidence>
<evidence type="ECO:0000255" key="2">
    <source>
        <dbReference type="PROSITE-ProRule" id="PRU01115"/>
    </source>
</evidence>
<comment type="function">
    <text evidence="1">Cell division protein that may be involved in stabilizing or promoting the assembly of the division complex.</text>
</comment>
<comment type="subcellular location">
    <subcellularLocation>
        <location evidence="1">Cell membrane</location>
        <topology evidence="1">Single-pass type II membrane protein</topology>
    </subcellularLocation>
    <text evidence="1">Localizes to the division septum.</text>
</comment>
<comment type="similarity">
    <text evidence="1">Belongs to the FtsQ/DivIB family. DivIB subfamily.</text>
</comment>
<gene>
    <name evidence="1" type="primary">divIB</name>
    <name type="ordered locus">CBO1461</name>
    <name type="ordered locus">CLC_1498</name>
</gene>
<sequence length="256" mass="29644">MSKDLISTDEYIKIKKKRKRIKKIVVLFIFLISILVTLCLKIPYFNIESIEIKGNVNIPKEVIKDSSTIKTGNNIFYTNKKDAIENISLNPYIEEVKITKKLPNKLQIYVKEREALFYNKVDNDFFIISKNGCVLEKRKEIKNMKLINLQGFEFNESKIGSALKAKDERAVKILNDFGVLLKNNTSDVIFTQLDLRNLLDIKIYYNGICVKIGTSDQIEKKLNTAINILKRDELKKAKKGYVDVSYEGNPVFYIEK</sequence>
<protein>
    <recommendedName>
        <fullName evidence="1">Cell division protein DivIB</fullName>
    </recommendedName>
</protein>
<feature type="chain" id="PRO_0000414762" description="Cell division protein DivIB">
    <location>
        <begin position="1"/>
        <end position="256"/>
    </location>
</feature>
<feature type="topological domain" description="Cytoplasmic" evidence="1">
    <location>
        <begin position="1"/>
        <end position="23"/>
    </location>
</feature>
<feature type="transmembrane region" description="Helical" evidence="1">
    <location>
        <begin position="24"/>
        <end position="44"/>
    </location>
</feature>
<feature type="topological domain" description="Extracellular" evidence="1">
    <location>
        <begin position="45"/>
        <end position="256"/>
    </location>
</feature>
<feature type="domain" description="POTRA" evidence="2">
    <location>
        <begin position="45"/>
        <end position="113"/>
    </location>
</feature>
<organism>
    <name type="scientific">Clostridium botulinum (strain Hall / ATCC 3502 / NCTC 13319 / Type A)</name>
    <dbReference type="NCBI Taxonomy" id="441771"/>
    <lineage>
        <taxon>Bacteria</taxon>
        <taxon>Bacillati</taxon>
        <taxon>Bacillota</taxon>
        <taxon>Clostridia</taxon>
        <taxon>Eubacteriales</taxon>
        <taxon>Clostridiaceae</taxon>
        <taxon>Clostridium</taxon>
    </lineage>
</organism>
<accession>A5I1U0</accession>
<accession>A7G3J7</accession>
<dbReference type="EMBL" id="CP000727">
    <property type="protein sequence ID" value="ABS36717.1"/>
    <property type="molecule type" value="Genomic_DNA"/>
</dbReference>
<dbReference type="EMBL" id="AM412317">
    <property type="protein sequence ID" value="CAL83004.1"/>
    <property type="molecule type" value="Genomic_DNA"/>
</dbReference>
<dbReference type="RefSeq" id="WP_011949038.1">
    <property type="nucleotide sequence ID" value="NC_009698.1"/>
</dbReference>
<dbReference type="RefSeq" id="YP_001253974.1">
    <property type="nucleotide sequence ID" value="NC_009495.1"/>
</dbReference>
<dbReference type="RefSeq" id="YP_001387362.1">
    <property type="nucleotide sequence ID" value="NC_009698.1"/>
</dbReference>
<dbReference type="SMR" id="A5I1U0"/>
<dbReference type="GeneID" id="5187324"/>
<dbReference type="KEGG" id="cbh:CLC_1498"/>
<dbReference type="KEGG" id="cbo:CBO1461"/>
<dbReference type="PATRIC" id="fig|413999.7.peg.1441"/>
<dbReference type="HOGENOM" id="CLU_047677_4_2_9"/>
<dbReference type="PRO" id="PR:A5I1U0"/>
<dbReference type="Proteomes" id="UP000001986">
    <property type="component" value="Chromosome"/>
</dbReference>
<dbReference type="GO" id="GO:0032153">
    <property type="term" value="C:cell division site"/>
    <property type="evidence" value="ECO:0007669"/>
    <property type="project" value="UniProtKB-UniRule"/>
</dbReference>
<dbReference type="GO" id="GO:0005886">
    <property type="term" value="C:plasma membrane"/>
    <property type="evidence" value="ECO:0007669"/>
    <property type="project" value="UniProtKB-SubCell"/>
</dbReference>
<dbReference type="GO" id="GO:0043093">
    <property type="term" value="P:FtsZ-dependent cytokinesis"/>
    <property type="evidence" value="ECO:0007669"/>
    <property type="project" value="UniProtKB-UniRule"/>
</dbReference>
<dbReference type="Gene3D" id="3.10.20.310">
    <property type="entry name" value="membrane protein fhac"/>
    <property type="match status" value="1"/>
</dbReference>
<dbReference type="HAMAP" id="MF_00912">
    <property type="entry name" value="DivIB"/>
    <property type="match status" value="1"/>
</dbReference>
<dbReference type="InterPro" id="IPR005548">
    <property type="entry name" value="Cell_div_FtsQ/DivIB_C"/>
</dbReference>
<dbReference type="InterPro" id="IPR026580">
    <property type="entry name" value="DivIB"/>
</dbReference>
<dbReference type="InterPro" id="IPR050487">
    <property type="entry name" value="FtsQ_DivIB"/>
</dbReference>
<dbReference type="InterPro" id="IPR034746">
    <property type="entry name" value="POTRA"/>
</dbReference>
<dbReference type="InterPro" id="IPR013685">
    <property type="entry name" value="POTRA_FtsQ_type"/>
</dbReference>
<dbReference type="PANTHER" id="PTHR37820">
    <property type="entry name" value="CELL DIVISION PROTEIN DIVIB"/>
    <property type="match status" value="1"/>
</dbReference>
<dbReference type="PANTHER" id="PTHR37820:SF1">
    <property type="entry name" value="CELL DIVISION PROTEIN FTSQ"/>
    <property type="match status" value="1"/>
</dbReference>
<dbReference type="Pfam" id="PF03799">
    <property type="entry name" value="FtsQ_DivIB_C"/>
    <property type="match status" value="1"/>
</dbReference>
<dbReference type="Pfam" id="PF08478">
    <property type="entry name" value="POTRA_1"/>
    <property type="match status" value="1"/>
</dbReference>
<dbReference type="PROSITE" id="PS51779">
    <property type="entry name" value="POTRA"/>
    <property type="match status" value="1"/>
</dbReference>
<name>DIVIB_CLOBH</name>
<keyword id="KW-0131">Cell cycle</keyword>
<keyword id="KW-0132">Cell division</keyword>
<keyword id="KW-1003">Cell membrane</keyword>
<keyword id="KW-0472">Membrane</keyword>
<keyword id="KW-1185">Reference proteome</keyword>
<keyword id="KW-0812">Transmembrane</keyword>
<keyword id="KW-1133">Transmembrane helix</keyword>
<reference key="1">
    <citation type="journal article" date="2007" name="Genome Res.">
        <title>Genome sequence of a proteolytic (Group I) Clostridium botulinum strain Hall A and comparative analysis of the clostridial genomes.</title>
        <authorList>
            <person name="Sebaihia M."/>
            <person name="Peck M.W."/>
            <person name="Minton N.P."/>
            <person name="Thomson N.R."/>
            <person name="Holden M.T.G."/>
            <person name="Mitchell W.J."/>
            <person name="Carter A.T."/>
            <person name="Bentley S.D."/>
            <person name="Mason D.R."/>
            <person name="Crossman L."/>
            <person name="Paul C.J."/>
            <person name="Ivens A."/>
            <person name="Wells-Bennik M.H.J."/>
            <person name="Davis I.J."/>
            <person name="Cerdeno-Tarraga A.M."/>
            <person name="Churcher C."/>
            <person name="Quail M.A."/>
            <person name="Chillingworth T."/>
            <person name="Feltwell T."/>
            <person name="Fraser A."/>
            <person name="Goodhead I."/>
            <person name="Hance Z."/>
            <person name="Jagels K."/>
            <person name="Larke N."/>
            <person name="Maddison M."/>
            <person name="Moule S."/>
            <person name="Mungall K."/>
            <person name="Norbertczak H."/>
            <person name="Rabbinowitsch E."/>
            <person name="Sanders M."/>
            <person name="Simmonds M."/>
            <person name="White B."/>
            <person name="Whithead S."/>
            <person name="Parkhill J."/>
        </authorList>
    </citation>
    <scope>NUCLEOTIDE SEQUENCE [LARGE SCALE GENOMIC DNA]</scope>
    <source>
        <strain>Hall / ATCC 3502 / NCTC 13319 / Type A</strain>
    </source>
</reference>
<reference key="2">
    <citation type="journal article" date="2007" name="PLoS ONE">
        <title>Analysis of the neurotoxin complex genes in Clostridium botulinum A1-A4 and B1 strains: BoNT/A3, /Ba4 and /B1 clusters are located within plasmids.</title>
        <authorList>
            <person name="Smith T.J."/>
            <person name="Hill K.K."/>
            <person name="Foley B.T."/>
            <person name="Detter J.C."/>
            <person name="Munk A.C."/>
            <person name="Bruce D.C."/>
            <person name="Doggett N.A."/>
            <person name="Smith L.A."/>
            <person name="Marks J.D."/>
            <person name="Xie G."/>
            <person name="Brettin T.S."/>
        </authorList>
    </citation>
    <scope>NUCLEOTIDE SEQUENCE [LARGE SCALE GENOMIC DNA]</scope>
    <source>
        <strain>Hall / ATCC 3502 / NCTC 13319 / Type A</strain>
    </source>
</reference>
<proteinExistence type="inferred from homology"/>